<accession>Q03W57</accession>
<organism>
    <name type="scientific">Leuconostoc mesenteroides subsp. mesenteroides (strain ATCC 8293 / DSM 20343 / BCRC 11652 / CCM 1803 / JCM 6124 / NCDO 523 / NBRC 100496 / NCIMB 8023 / NCTC 12954 / NRRL B-1118 / 37Y)</name>
    <dbReference type="NCBI Taxonomy" id="203120"/>
    <lineage>
        <taxon>Bacteria</taxon>
        <taxon>Bacillati</taxon>
        <taxon>Bacillota</taxon>
        <taxon>Bacilli</taxon>
        <taxon>Lactobacillales</taxon>
        <taxon>Lactobacillaceae</taxon>
        <taxon>Leuconostoc</taxon>
    </lineage>
</organism>
<feature type="chain" id="PRO_1000000302" description="Adenine phosphoribosyltransferase">
    <location>
        <begin position="1"/>
        <end position="176"/>
    </location>
</feature>
<keyword id="KW-0963">Cytoplasm</keyword>
<keyword id="KW-0328">Glycosyltransferase</keyword>
<keyword id="KW-0660">Purine salvage</keyword>
<keyword id="KW-1185">Reference proteome</keyword>
<keyword id="KW-0808">Transferase</keyword>
<protein>
    <recommendedName>
        <fullName evidence="1">Adenine phosphoribosyltransferase</fullName>
        <shortName evidence="1">APRT</shortName>
        <ecNumber evidence="1">2.4.2.7</ecNumber>
    </recommendedName>
</protein>
<comment type="function">
    <text evidence="1">Catalyzes a salvage reaction resulting in the formation of AMP, that is energically less costly than de novo synthesis.</text>
</comment>
<comment type="catalytic activity">
    <reaction evidence="1">
        <text>AMP + diphosphate = 5-phospho-alpha-D-ribose 1-diphosphate + adenine</text>
        <dbReference type="Rhea" id="RHEA:16609"/>
        <dbReference type="ChEBI" id="CHEBI:16708"/>
        <dbReference type="ChEBI" id="CHEBI:33019"/>
        <dbReference type="ChEBI" id="CHEBI:58017"/>
        <dbReference type="ChEBI" id="CHEBI:456215"/>
        <dbReference type="EC" id="2.4.2.7"/>
    </reaction>
</comment>
<comment type="pathway">
    <text evidence="1">Purine metabolism; AMP biosynthesis via salvage pathway; AMP from adenine: step 1/1.</text>
</comment>
<comment type="subunit">
    <text evidence="1">Homodimer.</text>
</comment>
<comment type="subcellular location">
    <subcellularLocation>
        <location evidence="1">Cytoplasm</location>
    </subcellularLocation>
</comment>
<comment type="similarity">
    <text evidence="1">Belongs to the purine/pyrimidine phosphoribosyltransferase family.</text>
</comment>
<dbReference type="EC" id="2.4.2.7" evidence="1"/>
<dbReference type="EMBL" id="CP000414">
    <property type="protein sequence ID" value="ABJ62565.1"/>
    <property type="molecule type" value="Genomic_DNA"/>
</dbReference>
<dbReference type="RefSeq" id="WP_011680153.1">
    <property type="nucleotide sequence ID" value="NC_008531.1"/>
</dbReference>
<dbReference type="SMR" id="Q03W57"/>
<dbReference type="EnsemblBacteria" id="ABJ62565">
    <property type="protein sequence ID" value="ABJ62565"/>
    <property type="gene ID" value="LEUM_1473"/>
</dbReference>
<dbReference type="GeneID" id="29576972"/>
<dbReference type="KEGG" id="lme:LEUM_1473"/>
<dbReference type="eggNOG" id="COG0503">
    <property type="taxonomic scope" value="Bacteria"/>
</dbReference>
<dbReference type="HOGENOM" id="CLU_063339_3_0_9"/>
<dbReference type="UniPathway" id="UPA00588">
    <property type="reaction ID" value="UER00646"/>
</dbReference>
<dbReference type="Proteomes" id="UP000000362">
    <property type="component" value="Chromosome"/>
</dbReference>
<dbReference type="GO" id="GO:0005737">
    <property type="term" value="C:cytoplasm"/>
    <property type="evidence" value="ECO:0007669"/>
    <property type="project" value="UniProtKB-SubCell"/>
</dbReference>
<dbReference type="GO" id="GO:0002055">
    <property type="term" value="F:adenine binding"/>
    <property type="evidence" value="ECO:0007669"/>
    <property type="project" value="TreeGrafter"/>
</dbReference>
<dbReference type="GO" id="GO:0003999">
    <property type="term" value="F:adenine phosphoribosyltransferase activity"/>
    <property type="evidence" value="ECO:0007669"/>
    <property type="project" value="UniProtKB-UniRule"/>
</dbReference>
<dbReference type="GO" id="GO:0016208">
    <property type="term" value="F:AMP binding"/>
    <property type="evidence" value="ECO:0007669"/>
    <property type="project" value="TreeGrafter"/>
</dbReference>
<dbReference type="GO" id="GO:0006168">
    <property type="term" value="P:adenine salvage"/>
    <property type="evidence" value="ECO:0007669"/>
    <property type="project" value="InterPro"/>
</dbReference>
<dbReference type="GO" id="GO:0044209">
    <property type="term" value="P:AMP salvage"/>
    <property type="evidence" value="ECO:0007669"/>
    <property type="project" value="UniProtKB-UniRule"/>
</dbReference>
<dbReference type="GO" id="GO:0006166">
    <property type="term" value="P:purine ribonucleoside salvage"/>
    <property type="evidence" value="ECO:0007669"/>
    <property type="project" value="UniProtKB-KW"/>
</dbReference>
<dbReference type="CDD" id="cd06223">
    <property type="entry name" value="PRTases_typeI"/>
    <property type="match status" value="1"/>
</dbReference>
<dbReference type="FunFam" id="3.40.50.2020:FF:000004">
    <property type="entry name" value="Adenine phosphoribosyltransferase"/>
    <property type="match status" value="1"/>
</dbReference>
<dbReference type="Gene3D" id="3.40.50.2020">
    <property type="match status" value="1"/>
</dbReference>
<dbReference type="HAMAP" id="MF_00004">
    <property type="entry name" value="Aden_phosphoribosyltr"/>
    <property type="match status" value="1"/>
</dbReference>
<dbReference type="InterPro" id="IPR005764">
    <property type="entry name" value="Ade_phspho_trans"/>
</dbReference>
<dbReference type="InterPro" id="IPR000836">
    <property type="entry name" value="PRibTrfase_dom"/>
</dbReference>
<dbReference type="InterPro" id="IPR029057">
    <property type="entry name" value="PRTase-like"/>
</dbReference>
<dbReference type="InterPro" id="IPR050054">
    <property type="entry name" value="UPRTase/APRTase"/>
</dbReference>
<dbReference type="NCBIfam" id="TIGR01090">
    <property type="entry name" value="apt"/>
    <property type="match status" value="1"/>
</dbReference>
<dbReference type="NCBIfam" id="NF002633">
    <property type="entry name" value="PRK02304.1-2"/>
    <property type="match status" value="1"/>
</dbReference>
<dbReference type="NCBIfam" id="NF002634">
    <property type="entry name" value="PRK02304.1-3"/>
    <property type="match status" value="1"/>
</dbReference>
<dbReference type="NCBIfam" id="NF002636">
    <property type="entry name" value="PRK02304.1-5"/>
    <property type="match status" value="1"/>
</dbReference>
<dbReference type="PANTHER" id="PTHR32315">
    <property type="entry name" value="ADENINE PHOSPHORIBOSYLTRANSFERASE"/>
    <property type="match status" value="1"/>
</dbReference>
<dbReference type="PANTHER" id="PTHR32315:SF3">
    <property type="entry name" value="ADENINE PHOSPHORIBOSYLTRANSFERASE"/>
    <property type="match status" value="1"/>
</dbReference>
<dbReference type="Pfam" id="PF00156">
    <property type="entry name" value="Pribosyltran"/>
    <property type="match status" value="1"/>
</dbReference>
<dbReference type="SUPFAM" id="SSF53271">
    <property type="entry name" value="PRTase-like"/>
    <property type="match status" value="1"/>
</dbReference>
<dbReference type="PROSITE" id="PS00103">
    <property type="entry name" value="PUR_PYR_PR_TRANSFER"/>
    <property type="match status" value="1"/>
</dbReference>
<proteinExistence type="inferred from homology"/>
<evidence type="ECO:0000255" key="1">
    <source>
        <dbReference type="HAMAP-Rule" id="MF_00004"/>
    </source>
</evidence>
<gene>
    <name evidence="1" type="primary">apt</name>
    <name type="ordered locus">LEUM_1473</name>
</gene>
<name>APT_LEUMM</name>
<reference key="1">
    <citation type="journal article" date="2006" name="Proc. Natl. Acad. Sci. U.S.A.">
        <title>Comparative genomics of the lactic acid bacteria.</title>
        <authorList>
            <person name="Makarova K.S."/>
            <person name="Slesarev A."/>
            <person name="Wolf Y.I."/>
            <person name="Sorokin A."/>
            <person name="Mirkin B."/>
            <person name="Koonin E.V."/>
            <person name="Pavlov A."/>
            <person name="Pavlova N."/>
            <person name="Karamychev V."/>
            <person name="Polouchine N."/>
            <person name="Shakhova V."/>
            <person name="Grigoriev I."/>
            <person name="Lou Y."/>
            <person name="Rohksar D."/>
            <person name="Lucas S."/>
            <person name="Huang K."/>
            <person name="Goodstein D.M."/>
            <person name="Hawkins T."/>
            <person name="Plengvidhya V."/>
            <person name="Welker D."/>
            <person name="Hughes J."/>
            <person name="Goh Y."/>
            <person name="Benson A."/>
            <person name="Baldwin K."/>
            <person name="Lee J.-H."/>
            <person name="Diaz-Muniz I."/>
            <person name="Dosti B."/>
            <person name="Smeianov V."/>
            <person name="Wechter W."/>
            <person name="Barabote R."/>
            <person name="Lorca G."/>
            <person name="Altermann E."/>
            <person name="Barrangou R."/>
            <person name="Ganesan B."/>
            <person name="Xie Y."/>
            <person name="Rawsthorne H."/>
            <person name="Tamir D."/>
            <person name="Parker C."/>
            <person name="Breidt F."/>
            <person name="Broadbent J.R."/>
            <person name="Hutkins R."/>
            <person name="O'Sullivan D."/>
            <person name="Steele J."/>
            <person name="Unlu G."/>
            <person name="Saier M.H. Jr."/>
            <person name="Klaenhammer T."/>
            <person name="Richardson P."/>
            <person name="Kozyavkin S."/>
            <person name="Weimer B.C."/>
            <person name="Mills D.A."/>
        </authorList>
    </citation>
    <scope>NUCLEOTIDE SEQUENCE [LARGE SCALE GENOMIC DNA]</scope>
    <source>
        <strain>ATCC 8293 / DSM 20343 / BCRC 11652 / CCM 1803 / JCM 6124 / NCDO 523 / NBRC 100496 / NCIMB 8023 / NCTC 12954 / NRRL B-1118 / 37Y</strain>
    </source>
</reference>
<sequence>MTVDLHDFVATVEDYPEPGVSFRDISPLMGDGVAYKQAVDAIADFAKHLNVDLIAGPESRGFIVGSPLAYAMNIGFVPARKGGKLPREAVSASYTLEYGGVNELEIHKDAIKPGQRVLIVDDLLATGGTINATREIIEKLGGIVAGVAFIIELESLQGREKIMKAGEVPFLALMEY</sequence>